<reference key="1">
    <citation type="journal article" date="2008" name="Chem. Biol. Interact.">
        <title>Extending the Bacillus cereus group genomics to putative food-borne pathogens of different toxicity.</title>
        <authorList>
            <person name="Lapidus A."/>
            <person name="Goltsman E."/>
            <person name="Auger S."/>
            <person name="Galleron N."/>
            <person name="Segurens B."/>
            <person name="Dossat C."/>
            <person name="Land M.L."/>
            <person name="Broussolle V."/>
            <person name="Brillard J."/>
            <person name="Guinebretiere M.-H."/>
            <person name="Sanchis V."/>
            <person name="Nguen-the C."/>
            <person name="Lereclus D."/>
            <person name="Richardson P."/>
            <person name="Wincker P."/>
            <person name="Weissenbach J."/>
            <person name="Ehrlich S.D."/>
            <person name="Sorokin A."/>
        </authorList>
    </citation>
    <scope>NUCLEOTIDE SEQUENCE [LARGE SCALE GENOMIC DNA]</scope>
    <source>
        <strain>DSM 22905 / CIP 110041 / 391-98 / NVH 391-98</strain>
    </source>
</reference>
<evidence type="ECO:0000255" key="1">
    <source>
        <dbReference type="HAMAP-Rule" id="MF_01023"/>
    </source>
</evidence>
<comment type="catalytic activity">
    <reaction evidence="1">
        <text>L-histidinol phosphate + 2-oxoglutarate = 3-(imidazol-4-yl)-2-oxopropyl phosphate + L-glutamate</text>
        <dbReference type="Rhea" id="RHEA:23744"/>
        <dbReference type="ChEBI" id="CHEBI:16810"/>
        <dbReference type="ChEBI" id="CHEBI:29985"/>
        <dbReference type="ChEBI" id="CHEBI:57766"/>
        <dbReference type="ChEBI" id="CHEBI:57980"/>
        <dbReference type="EC" id="2.6.1.9"/>
    </reaction>
</comment>
<comment type="cofactor">
    <cofactor evidence="1">
        <name>pyridoxal 5'-phosphate</name>
        <dbReference type="ChEBI" id="CHEBI:597326"/>
    </cofactor>
</comment>
<comment type="pathway">
    <text evidence="1">Amino-acid biosynthesis; L-histidine biosynthesis; L-histidine from 5-phospho-alpha-D-ribose 1-diphosphate: step 7/9.</text>
</comment>
<comment type="subunit">
    <text evidence="1">Homodimer.</text>
</comment>
<comment type="similarity">
    <text evidence="1">Belongs to the class-II pyridoxal-phosphate-dependent aminotransferase family. Histidinol-phosphate aminotransferase subfamily.</text>
</comment>
<proteinExistence type="inferred from homology"/>
<keyword id="KW-0028">Amino-acid biosynthesis</keyword>
<keyword id="KW-0032">Aminotransferase</keyword>
<keyword id="KW-0368">Histidine biosynthesis</keyword>
<keyword id="KW-0663">Pyridoxal phosphate</keyword>
<keyword id="KW-0808">Transferase</keyword>
<accession>A7GN55</accession>
<organism>
    <name type="scientific">Bacillus cytotoxicus (strain DSM 22905 / CIP 110041 / 391-98 / NVH 391-98)</name>
    <dbReference type="NCBI Taxonomy" id="315749"/>
    <lineage>
        <taxon>Bacteria</taxon>
        <taxon>Bacillati</taxon>
        <taxon>Bacillota</taxon>
        <taxon>Bacilli</taxon>
        <taxon>Bacillales</taxon>
        <taxon>Bacillaceae</taxon>
        <taxon>Bacillus</taxon>
        <taxon>Bacillus cereus group</taxon>
    </lineage>
</organism>
<sequence length="370" mass="41937">MKVKEQLFSLNAYVPGKNIEEVKREYGLSKIVKLASNENPFGCSKRVKEALALLNEQYALYPDGAAFELRQKVANHLKVQPEQLLFGSGLDEVIQMISRALLHKGTNVVMARPTFSQYRHHAIIEGAEVREVPLKDGIHDLDAMLEQVDYNTRIVWVCNPNNPTGTYVEKQKLLSFLENVPKSSLVIMDEAYYEYAGAEDYPQTLPLLEKYENLMVLRTFSKAYGLAAFRIGYAVGYAELIKKLEVARLPFNTSTVAQVVASVAIDDQSFLQECVKKNAEGLEQYYQFCKEYDVFYYPSQTNFIFLKIGLPGNEVFERLMKKGYIVRSGAPFGLLDGIRITVGLKEENAEIIALLANLVKEHVKKEETYS</sequence>
<name>HIS8_BACCN</name>
<protein>
    <recommendedName>
        <fullName evidence="1">Histidinol-phosphate aminotransferase</fullName>
        <ecNumber evidence="1">2.6.1.9</ecNumber>
    </recommendedName>
    <alternativeName>
        <fullName evidence="1">Imidazole acetol-phosphate transaminase</fullName>
    </alternativeName>
</protein>
<feature type="chain" id="PRO_1000084187" description="Histidinol-phosphate aminotransferase">
    <location>
        <begin position="1"/>
        <end position="370"/>
    </location>
</feature>
<feature type="modified residue" description="N6-(pyridoxal phosphate)lysine" evidence="1">
    <location>
        <position position="222"/>
    </location>
</feature>
<dbReference type="EC" id="2.6.1.9" evidence="1"/>
<dbReference type="EMBL" id="CP000764">
    <property type="protein sequence ID" value="ABS21563.1"/>
    <property type="molecule type" value="Genomic_DNA"/>
</dbReference>
<dbReference type="RefSeq" id="WP_011984314.1">
    <property type="nucleotide sequence ID" value="NC_009674.1"/>
</dbReference>
<dbReference type="SMR" id="A7GN55"/>
<dbReference type="STRING" id="315749.Bcer98_1241"/>
<dbReference type="GeneID" id="33896590"/>
<dbReference type="KEGG" id="bcy:Bcer98_1241"/>
<dbReference type="eggNOG" id="COG0079">
    <property type="taxonomic scope" value="Bacteria"/>
</dbReference>
<dbReference type="HOGENOM" id="CLU_017584_3_3_9"/>
<dbReference type="OrthoDB" id="9813612at2"/>
<dbReference type="UniPathway" id="UPA00031">
    <property type="reaction ID" value="UER00012"/>
</dbReference>
<dbReference type="Proteomes" id="UP000002300">
    <property type="component" value="Chromosome"/>
</dbReference>
<dbReference type="GO" id="GO:0004400">
    <property type="term" value="F:histidinol-phosphate transaminase activity"/>
    <property type="evidence" value="ECO:0007669"/>
    <property type="project" value="UniProtKB-UniRule"/>
</dbReference>
<dbReference type="GO" id="GO:0030170">
    <property type="term" value="F:pyridoxal phosphate binding"/>
    <property type="evidence" value="ECO:0007669"/>
    <property type="project" value="InterPro"/>
</dbReference>
<dbReference type="GO" id="GO:0000105">
    <property type="term" value="P:L-histidine biosynthetic process"/>
    <property type="evidence" value="ECO:0007669"/>
    <property type="project" value="UniProtKB-UniRule"/>
</dbReference>
<dbReference type="CDD" id="cd00609">
    <property type="entry name" value="AAT_like"/>
    <property type="match status" value="1"/>
</dbReference>
<dbReference type="Gene3D" id="3.90.1150.10">
    <property type="entry name" value="Aspartate Aminotransferase, domain 1"/>
    <property type="match status" value="1"/>
</dbReference>
<dbReference type="Gene3D" id="3.40.640.10">
    <property type="entry name" value="Type I PLP-dependent aspartate aminotransferase-like (Major domain)"/>
    <property type="match status" value="1"/>
</dbReference>
<dbReference type="HAMAP" id="MF_01023">
    <property type="entry name" value="HisC_aminotrans_2"/>
    <property type="match status" value="1"/>
</dbReference>
<dbReference type="InterPro" id="IPR001917">
    <property type="entry name" value="Aminotrans_II_pyridoxalP_BS"/>
</dbReference>
<dbReference type="InterPro" id="IPR004839">
    <property type="entry name" value="Aminotransferase_I/II_large"/>
</dbReference>
<dbReference type="InterPro" id="IPR005861">
    <property type="entry name" value="HisP_aminotrans"/>
</dbReference>
<dbReference type="InterPro" id="IPR050106">
    <property type="entry name" value="HistidinolP_aminotransfase"/>
</dbReference>
<dbReference type="InterPro" id="IPR015424">
    <property type="entry name" value="PyrdxlP-dep_Trfase"/>
</dbReference>
<dbReference type="InterPro" id="IPR015421">
    <property type="entry name" value="PyrdxlP-dep_Trfase_major"/>
</dbReference>
<dbReference type="InterPro" id="IPR015422">
    <property type="entry name" value="PyrdxlP-dep_Trfase_small"/>
</dbReference>
<dbReference type="NCBIfam" id="TIGR01141">
    <property type="entry name" value="hisC"/>
    <property type="match status" value="1"/>
</dbReference>
<dbReference type="PANTHER" id="PTHR43643:SF3">
    <property type="entry name" value="HISTIDINOL-PHOSPHATE AMINOTRANSFERASE"/>
    <property type="match status" value="1"/>
</dbReference>
<dbReference type="PANTHER" id="PTHR43643">
    <property type="entry name" value="HISTIDINOL-PHOSPHATE AMINOTRANSFERASE 2"/>
    <property type="match status" value="1"/>
</dbReference>
<dbReference type="Pfam" id="PF00155">
    <property type="entry name" value="Aminotran_1_2"/>
    <property type="match status" value="1"/>
</dbReference>
<dbReference type="SUPFAM" id="SSF53383">
    <property type="entry name" value="PLP-dependent transferases"/>
    <property type="match status" value="1"/>
</dbReference>
<dbReference type="PROSITE" id="PS00599">
    <property type="entry name" value="AA_TRANSFER_CLASS_2"/>
    <property type="match status" value="1"/>
</dbReference>
<gene>
    <name evidence="1" type="primary">hisC</name>
    <name type="ordered locus">Bcer98_1241</name>
</gene>